<sequence length="123" mass="12667">MSIETLVEEIGKLTLTEASELVKSLEEKFGVSAAPAVVAGVAAAAPAAAAAEEQTEFDVVLTAAGESKINVIKVVRAITGLGLKEAKDMVDGAPKTVKEAVSKDEAEKLMKELKDAGASVELK</sequence>
<feature type="chain" id="PRO_0000243461" description="Large ribosomal subunit protein bL12">
    <location>
        <begin position="1"/>
        <end position="123"/>
    </location>
</feature>
<keyword id="KW-1185">Reference proteome</keyword>
<keyword id="KW-0687">Ribonucleoprotein</keyword>
<keyword id="KW-0689">Ribosomal protein</keyword>
<name>RL7_CHLL3</name>
<gene>
    <name evidence="1" type="primary">rplL</name>
    <name type="ordered locus">Plut_1963</name>
</gene>
<evidence type="ECO:0000255" key="1">
    <source>
        <dbReference type="HAMAP-Rule" id="MF_00368"/>
    </source>
</evidence>
<evidence type="ECO:0000305" key="2"/>
<proteinExistence type="inferred from homology"/>
<reference key="1">
    <citation type="submission" date="2005-08" db="EMBL/GenBank/DDBJ databases">
        <title>Complete sequence of Pelodictyon luteolum DSM 273.</title>
        <authorList>
            <consortium name="US DOE Joint Genome Institute"/>
            <person name="Copeland A."/>
            <person name="Lucas S."/>
            <person name="Lapidus A."/>
            <person name="Barry K."/>
            <person name="Detter J.C."/>
            <person name="Glavina T."/>
            <person name="Hammon N."/>
            <person name="Israni S."/>
            <person name="Pitluck S."/>
            <person name="Bryant D."/>
            <person name="Schmutz J."/>
            <person name="Larimer F."/>
            <person name="Land M."/>
            <person name="Kyrpides N."/>
            <person name="Ivanova N."/>
            <person name="Richardson P."/>
        </authorList>
    </citation>
    <scope>NUCLEOTIDE SEQUENCE [LARGE SCALE GENOMIC DNA]</scope>
    <source>
        <strain>DSM 273 / BCRC 81028 / 2530</strain>
    </source>
</reference>
<protein>
    <recommendedName>
        <fullName evidence="1">Large ribosomal subunit protein bL12</fullName>
    </recommendedName>
    <alternativeName>
        <fullName evidence="2">50S ribosomal protein L7/L12</fullName>
    </alternativeName>
</protein>
<comment type="function">
    <text evidence="1">Forms part of the ribosomal stalk which helps the ribosome interact with GTP-bound translation factors. Is thus essential for accurate translation.</text>
</comment>
<comment type="subunit">
    <text evidence="1">Homodimer. Part of the ribosomal stalk of the 50S ribosomal subunit. Forms a multimeric L10(L12)X complex, where L10 forms an elongated spine to which 2 to 4 L12 dimers bind in a sequential fashion. Binds GTP-bound translation factors.</text>
</comment>
<comment type="similarity">
    <text evidence="1">Belongs to the bacterial ribosomal protein bL12 family.</text>
</comment>
<dbReference type="EMBL" id="CP000096">
    <property type="protein sequence ID" value="ABB24805.1"/>
    <property type="molecule type" value="Genomic_DNA"/>
</dbReference>
<dbReference type="RefSeq" id="WP_011358675.1">
    <property type="nucleotide sequence ID" value="NC_007512.1"/>
</dbReference>
<dbReference type="SMR" id="Q3B1H6"/>
<dbReference type="STRING" id="319225.Plut_1963"/>
<dbReference type="KEGG" id="plt:Plut_1963"/>
<dbReference type="eggNOG" id="COG0222">
    <property type="taxonomic scope" value="Bacteria"/>
</dbReference>
<dbReference type="HOGENOM" id="CLU_086499_3_2_10"/>
<dbReference type="OrthoDB" id="9811748at2"/>
<dbReference type="Proteomes" id="UP000002709">
    <property type="component" value="Chromosome"/>
</dbReference>
<dbReference type="GO" id="GO:0022625">
    <property type="term" value="C:cytosolic large ribosomal subunit"/>
    <property type="evidence" value="ECO:0007669"/>
    <property type="project" value="TreeGrafter"/>
</dbReference>
<dbReference type="GO" id="GO:0003729">
    <property type="term" value="F:mRNA binding"/>
    <property type="evidence" value="ECO:0007669"/>
    <property type="project" value="TreeGrafter"/>
</dbReference>
<dbReference type="GO" id="GO:0003735">
    <property type="term" value="F:structural constituent of ribosome"/>
    <property type="evidence" value="ECO:0007669"/>
    <property type="project" value="InterPro"/>
</dbReference>
<dbReference type="GO" id="GO:0006412">
    <property type="term" value="P:translation"/>
    <property type="evidence" value="ECO:0007669"/>
    <property type="project" value="UniProtKB-UniRule"/>
</dbReference>
<dbReference type="CDD" id="cd00387">
    <property type="entry name" value="Ribosomal_L7_L12"/>
    <property type="match status" value="1"/>
</dbReference>
<dbReference type="FunFam" id="3.30.1390.10:FF:000001">
    <property type="entry name" value="50S ribosomal protein L7/L12"/>
    <property type="match status" value="1"/>
</dbReference>
<dbReference type="Gene3D" id="3.30.1390.10">
    <property type="match status" value="1"/>
</dbReference>
<dbReference type="Gene3D" id="1.20.5.710">
    <property type="entry name" value="Single helix bin"/>
    <property type="match status" value="1"/>
</dbReference>
<dbReference type="HAMAP" id="MF_00368">
    <property type="entry name" value="Ribosomal_bL12"/>
    <property type="match status" value="1"/>
</dbReference>
<dbReference type="InterPro" id="IPR000206">
    <property type="entry name" value="Ribosomal_bL12"/>
</dbReference>
<dbReference type="InterPro" id="IPR013823">
    <property type="entry name" value="Ribosomal_bL12_C"/>
</dbReference>
<dbReference type="InterPro" id="IPR014719">
    <property type="entry name" value="Ribosomal_bL12_C/ClpS-like"/>
</dbReference>
<dbReference type="InterPro" id="IPR008932">
    <property type="entry name" value="Ribosomal_bL12_oligo"/>
</dbReference>
<dbReference type="InterPro" id="IPR036235">
    <property type="entry name" value="Ribosomal_bL12_oligo_N_sf"/>
</dbReference>
<dbReference type="NCBIfam" id="TIGR00855">
    <property type="entry name" value="L12"/>
    <property type="match status" value="1"/>
</dbReference>
<dbReference type="PANTHER" id="PTHR45987">
    <property type="entry name" value="39S RIBOSOMAL PROTEIN L12"/>
    <property type="match status" value="1"/>
</dbReference>
<dbReference type="PANTHER" id="PTHR45987:SF4">
    <property type="entry name" value="LARGE RIBOSOMAL SUBUNIT PROTEIN BL12M"/>
    <property type="match status" value="1"/>
</dbReference>
<dbReference type="Pfam" id="PF00542">
    <property type="entry name" value="Ribosomal_L12"/>
    <property type="match status" value="1"/>
</dbReference>
<dbReference type="Pfam" id="PF16320">
    <property type="entry name" value="Ribosomal_L12_N"/>
    <property type="match status" value="1"/>
</dbReference>
<dbReference type="SUPFAM" id="SSF54736">
    <property type="entry name" value="ClpS-like"/>
    <property type="match status" value="1"/>
</dbReference>
<dbReference type="SUPFAM" id="SSF48300">
    <property type="entry name" value="Ribosomal protein L7/12, oligomerisation (N-terminal) domain"/>
    <property type="match status" value="1"/>
</dbReference>
<organism>
    <name type="scientific">Chlorobium luteolum (strain DSM 273 / BCRC 81028 / 2530)</name>
    <name type="common">Pelodictyon luteolum</name>
    <dbReference type="NCBI Taxonomy" id="319225"/>
    <lineage>
        <taxon>Bacteria</taxon>
        <taxon>Pseudomonadati</taxon>
        <taxon>Chlorobiota</taxon>
        <taxon>Chlorobiia</taxon>
        <taxon>Chlorobiales</taxon>
        <taxon>Chlorobiaceae</taxon>
        <taxon>Chlorobium/Pelodictyon group</taxon>
        <taxon>Pelodictyon</taxon>
    </lineage>
</organism>
<accession>Q3B1H6</accession>